<evidence type="ECO:0000255" key="1">
    <source>
        <dbReference type="HAMAP-Rule" id="MF_01719"/>
    </source>
</evidence>
<evidence type="ECO:0000305" key="2"/>
<comment type="function">
    <text evidence="1">Part of the ABC transporter complex MetNIQ involved in methionine import. Responsible for energy coupling to the transport system.</text>
</comment>
<comment type="catalytic activity">
    <reaction evidence="1">
        <text>L-methionine(out) + ATP + H2O = L-methionine(in) + ADP + phosphate + H(+)</text>
        <dbReference type="Rhea" id="RHEA:29779"/>
        <dbReference type="ChEBI" id="CHEBI:15377"/>
        <dbReference type="ChEBI" id="CHEBI:15378"/>
        <dbReference type="ChEBI" id="CHEBI:30616"/>
        <dbReference type="ChEBI" id="CHEBI:43474"/>
        <dbReference type="ChEBI" id="CHEBI:57844"/>
        <dbReference type="ChEBI" id="CHEBI:456216"/>
        <dbReference type="EC" id="7.4.2.11"/>
    </reaction>
</comment>
<comment type="catalytic activity">
    <reaction evidence="1">
        <text>D-methionine(out) + ATP + H2O = D-methionine(in) + ADP + phosphate + H(+)</text>
        <dbReference type="Rhea" id="RHEA:29767"/>
        <dbReference type="ChEBI" id="CHEBI:15377"/>
        <dbReference type="ChEBI" id="CHEBI:15378"/>
        <dbReference type="ChEBI" id="CHEBI:30616"/>
        <dbReference type="ChEBI" id="CHEBI:43474"/>
        <dbReference type="ChEBI" id="CHEBI:57932"/>
        <dbReference type="ChEBI" id="CHEBI:456216"/>
        <dbReference type="EC" id="7.4.2.11"/>
    </reaction>
</comment>
<comment type="subunit">
    <text evidence="1">The complex is composed of two ATP-binding proteins (MetN), two transmembrane proteins (MetI) and a solute-binding protein (MetQ).</text>
</comment>
<comment type="subcellular location">
    <subcellularLocation>
        <location evidence="1">Cell inner membrane</location>
        <topology evidence="1">Peripheral membrane protein</topology>
    </subcellularLocation>
</comment>
<comment type="similarity">
    <text evidence="1">Belongs to the ABC transporter superfamily. Methionine importer (TC 3.A.1.24) family.</text>
</comment>
<dbReference type="EC" id="7.4.2.11" evidence="1"/>
<dbReference type="EMBL" id="AF010307">
    <property type="protein sequence ID" value="AAC45666.1"/>
    <property type="molecule type" value="Genomic_DNA"/>
</dbReference>
<dbReference type="EMBL" id="AE000511">
    <property type="protein sequence ID" value="AAD08616.1"/>
    <property type="molecule type" value="Genomic_DNA"/>
</dbReference>
<dbReference type="PIR" id="H64716">
    <property type="entry name" value="H64716"/>
</dbReference>
<dbReference type="RefSeq" id="NP_208367.1">
    <property type="nucleotide sequence ID" value="NC_000915.1"/>
</dbReference>
<dbReference type="RefSeq" id="WP_000259757.1">
    <property type="nucleotide sequence ID" value="NC_018939.1"/>
</dbReference>
<dbReference type="SMR" id="O26096"/>
<dbReference type="DIP" id="DIP-3488N"/>
<dbReference type="FunCoup" id="O26096">
    <property type="interactions" value="119"/>
</dbReference>
<dbReference type="IntAct" id="O26096">
    <property type="interactions" value="3"/>
</dbReference>
<dbReference type="MINT" id="O26096"/>
<dbReference type="STRING" id="85962.HP_1576"/>
<dbReference type="PaxDb" id="85962-C694_08165"/>
<dbReference type="EnsemblBacteria" id="AAD08616">
    <property type="protein sequence ID" value="AAD08616"/>
    <property type="gene ID" value="HP_1576"/>
</dbReference>
<dbReference type="KEGG" id="heo:C694_08165"/>
<dbReference type="KEGG" id="hpy:HP_1576"/>
<dbReference type="PATRIC" id="fig|85962.47.peg.1694"/>
<dbReference type="eggNOG" id="COG1135">
    <property type="taxonomic scope" value="Bacteria"/>
</dbReference>
<dbReference type="InParanoid" id="O26096"/>
<dbReference type="OrthoDB" id="9814623at2"/>
<dbReference type="PhylomeDB" id="O26096"/>
<dbReference type="Proteomes" id="UP000000429">
    <property type="component" value="Chromosome"/>
</dbReference>
<dbReference type="GO" id="GO:0005886">
    <property type="term" value="C:plasma membrane"/>
    <property type="evidence" value="ECO:0007669"/>
    <property type="project" value="UniProtKB-SubCell"/>
</dbReference>
<dbReference type="GO" id="GO:0033232">
    <property type="term" value="F:ABC-type D-methionine transporter activity"/>
    <property type="evidence" value="ECO:0007669"/>
    <property type="project" value="UniProtKB-EC"/>
</dbReference>
<dbReference type="GO" id="GO:0005524">
    <property type="term" value="F:ATP binding"/>
    <property type="evidence" value="ECO:0007669"/>
    <property type="project" value="UniProtKB-KW"/>
</dbReference>
<dbReference type="GO" id="GO:0016887">
    <property type="term" value="F:ATP hydrolysis activity"/>
    <property type="evidence" value="ECO:0007669"/>
    <property type="project" value="InterPro"/>
</dbReference>
<dbReference type="CDD" id="cd03258">
    <property type="entry name" value="ABC_MetN_methionine_transporter"/>
    <property type="match status" value="1"/>
</dbReference>
<dbReference type="FunFam" id="3.40.50.300:FF:000056">
    <property type="entry name" value="Cell division ATP-binding protein FtsE"/>
    <property type="match status" value="1"/>
</dbReference>
<dbReference type="Gene3D" id="3.30.70.260">
    <property type="match status" value="1"/>
</dbReference>
<dbReference type="Gene3D" id="3.40.50.300">
    <property type="entry name" value="P-loop containing nucleotide triphosphate hydrolases"/>
    <property type="match status" value="1"/>
</dbReference>
<dbReference type="InterPro" id="IPR003593">
    <property type="entry name" value="AAA+_ATPase"/>
</dbReference>
<dbReference type="InterPro" id="IPR003439">
    <property type="entry name" value="ABC_transporter-like_ATP-bd"/>
</dbReference>
<dbReference type="InterPro" id="IPR017871">
    <property type="entry name" value="ABC_transporter-like_CS"/>
</dbReference>
<dbReference type="InterPro" id="IPR045865">
    <property type="entry name" value="ACT-like_dom_sf"/>
</dbReference>
<dbReference type="InterPro" id="IPR041701">
    <property type="entry name" value="MetN_ABC"/>
</dbReference>
<dbReference type="InterPro" id="IPR050086">
    <property type="entry name" value="MetN_ABC_transporter-like"/>
</dbReference>
<dbReference type="InterPro" id="IPR018449">
    <property type="entry name" value="NIL_domain"/>
</dbReference>
<dbReference type="InterPro" id="IPR027417">
    <property type="entry name" value="P-loop_NTPase"/>
</dbReference>
<dbReference type="PANTHER" id="PTHR43166">
    <property type="entry name" value="AMINO ACID IMPORT ATP-BINDING PROTEIN"/>
    <property type="match status" value="1"/>
</dbReference>
<dbReference type="PANTHER" id="PTHR43166:SF30">
    <property type="entry name" value="METHIONINE IMPORT ATP-BINDING PROTEIN METN"/>
    <property type="match status" value="1"/>
</dbReference>
<dbReference type="Pfam" id="PF00005">
    <property type="entry name" value="ABC_tran"/>
    <property type="match status" value="1"/>
</dbReference>
<dbReference type="Pfam" id="PF09383">
    <property type="entry name" value="NIL"/>
    <property type="match status" value="1"/>
</dbReference>
<dbReference type="SMART" id="SM00382">
    <property type="entry name" value="AAA"/>
    <property type="match status" value="1"/>
</dbReference>
<dbReference type="SMART" id="SM00930">
    <property type="entry name" value="NIL"/>
    <property type="match status" value="1"/>
</dbReference>
<dbReference type="SUPFAM" id="SSF55021">
    <property type="entry name" value="ACT-like"/>
    <property type="match status" value="1"/>
</dbReference>
<dbReference type="SUPFAM" id="SSF52540">
    <property type="entry name" value="P-loop containing nucleoside triphosphate hydrolases"/>
    <property type="match status" value="1"/>
</dbReference>
<dbReference type="PROSITE" id="PS00211">
    <property type="entry name" value="ABC_TRANSPORTER_1"/>
    <property type="match status" value="1"/>
</dbReference>
<dbReference type="PROSITE" id="PS50893">
    <property type="entry name" value="ABC_TRANSPORTER_2"/>
    <property type="match status" value="1"/>
</dbReference>
<dbReference type="PROSITE" id="PS51264">
    <property type="entry name" value="METN"/>
    <property type="match status" value="1"/>
</dbReference>
<name>METN_HELPY</name>
<keyword id="KW-0029">Amino-acid transport</keyword>
<keyword id="KW-0067">ATP-binding</keyword>
<keyword id="KW-0997">Cell inner membrane</keyword>
<keyword id="KW-1003">Cell membrane</keyword>
<keyword id="KW-0472">Membrane</keyword>
<keyword id="KW-0547">Nucleotide-binding</keyword>
<keyword id="KW-1185">Reference proteome</keyword>
<keyword id="KW-1278">Translocase</keyword>
<keyword id="KW-0813">Transport</keyword>
<protein>
    <recommendedName>
        <fullName evidence="1">Methionine import ATP-binding protein MetN</fullName>
        <ecNumber evidence="1">7.4.2.11</ecNumber>
    </recommendedName>
</protein>
<feature type="chain" id="PRO_0000270310" description="Methionine import ATP-binding protein MetN">
    <location>
        <begin position="1"/>
        <end position="327"/>
    </location>
</feature>
<feature type="domain" description="ABC transporter" evidence="1">
    <location>
        <begin position="3"/>
        <end position="239"/>
    </location>
</feature>
<feature type="binding site" evidence="1">
    <location>
        <begin position="36"/>
        <end position="43"/>
    </location>
    <ligand>
        <name>ATP</name>
        <dbReference type="ChEBI" id="CHEBI:30616"/>
    </ligand>
</feature>
<feature type="sequence conflict" description="In Ref. 1; AAC45666." evidence="2" ref="1">
    <original>N</original>
    <variation>D</variation>
    <location>
        <position position="96"/>
    </location>
</feature>
<feature type="sequence conflict" description="In Ref. 1; AAC45666." evidence="2" ref="1">
    <original>N</original>
    <variation>T</variation>
    <location>
        <position position="113"/>
    </location>
</feature>
<feature type="sequence conflict" description="In Ref. 1; AAC45666." evidence="2" ref="1">
    <original>M</original>
    <variation>V</variation>
    <location>
        <position position="132"/>
    </location>
</feature>
<feature type="sequence conflict" description="In Ref. 1; AAC45666." evidence="2" ref="1">
    <original>Q</original>
    <variation>E</variation>
    <location>
        <position position="145"/>
    </location>
</feature>
<feature type="sequence conflict" description="In Ref. 1; AAC45666." evidence="2" ref="1">
    <original>I</original>
    <variation>V</variation>
    <location>
        <position position="192"/>
    </location>
</feature>
<feature type="sequence conflict" description="In Ref. 1; AAC45666." evidence="2" ref="1">
    <original>E</original>
    <variation>Q</variation>
    <location>
        <position position="198"/>
    </location>
</feature>
<feature type="sequence conflict" description="In Ref. 1; AAC45666." evidence="2" ref="1">
    <original>D</original>
    <variation>N</variation>
    <location>
        <position position="247"/>
    </location>
</feature>
<feature type="sequence conflict" description="In Ref. 1; AAC45666." evidence="2" ref="1">
    <original>V</original>
    <variation>M</variation>
    <location>
        <position position="279"/>
    </location>
</feature>
<reference key="1">
    <citation type="journal article" date="1997" name="J. Bacteriol.">
        <title>Helicobacter pylori ABC transporter: effect of allelic exchange mutagenesis on urease activity.</title>
        <authorList>
            <person name="Hendricks J.K."/>
            <person name="Mobley H.L.T."/>
        </authorList>
    </citation>
    <scope>NUCLEOTIDE SEQUENCE [GENOMIC DNA]</scope>
    <source>
        <strain>ATCC 43504 / NCTC 11637 / JCM 7653 / RPH 13487</strain>
    </source>
</reference>
<reference key="2">
    <citation type="journal article" date="1997" name="Nature">
        <title>The complete genome sequence of the gastric pathogen Helicobacter pylori.</title>
        <authorList>
            <person name="Tomb J.-F."/>
            <person name="White O."/>
            <person name="Kerlavage A.R."/>
            <person name="Clayton R.A."/>
            <person name="Sutton G.G."/>
            <person name="Fleischmann R.D."/>
            <person name="Ketchum K.A."/>
            <person name="Klenk H.-P."/>
            <person name="Gill S.R."/>
            <person name="Dougherty B.A."/>
            <person name="Nelson K.E."/>
            <person name="Quackenbush J."/>
            <person name="Zhou L."/>
            <person name="Kirkness E.F."/>
            <person name="Peterson S.N."/>
            <person name="Loftus B.J."/>
            <person name="Richardson D.L."/>
            <person name="Dodson R.J."/>
            <person name="Khalak H.G."/>
            <person name="Glodek A."/>
            <person name="McKenney K."/>
            <person name="FitzGerald L.M."/>
            <person name="Lee N."/>
            <person name="Adams M.D."/>
            <person name="Hickey E.K."/>
            <person name="Berg D.E."/>
            <person name="Gocayne J.D."/>
            <person name="Utterback T.R."/>
            <person name="Peterson J.D."/>
            <person name="Kelley J.M."/>
            <person name="Cotton M.D."/>
            <person name="Weidman J.F."/>
            <person name="Fujii C."/>
            <person name="Bowman C."/>
            <person name="Watthey L."/>
            <person name="Wallin E."/>
            <person name="Hayes W.S."/>
            <person name="Borodovsky M."/>
            <person name="Karp P.D."/>
            <person name="Smith H.O."/>
            <person name="Fraser C.M."/>
            <person name="Venter J.C."/>
        </authorList>
    </citation>
    <scope>NUCLEOTIDE SEQUENCE [LARGE SCALE GENOMIC DNA]</scope>
    <source>
        <strain>ATCC 700392 / 26695</strain>
    </source>
</reference>
<organism>
    <name type="scientific">Helicobacter pylori (strain ATCC 700392 / 26695)</name>
    <name type="common">Campylobacter pylori</name>
    <dbReference type="NCBI Taxonomy" id="85962"/>
    <lineage>
        <taxon>Bacteria</taxon>
        <taxon>Pseudomonadati</taxon>
        <taxon>Campylobacterota</taxon>
        <taxon>Epsilonproteobacteria</taxon>
        <taxon>Campylobacterales</taxon>
        <taxon>Helicobacteraceae</taxon>
        <taxon>Helicobacter</taxon>
    </lineage>
</organism>
<proteinExistence type="inferred from homology"/>
<gene>
    <name evidence="1" type="primary">metN</name>
    <name type="ordered locus">HP_1576</name>
</gene>
<accession>O26096</accession>
<accession>O30552</accession>
<sequence length="327" mass="36622">MVVELKNIEKIYENGFHALKGVNLELKKGDILGVIGYSGAGKSTLIRLINCLERPSSGEVLVNGVNLLKLKPKELQKARQKIGMIFQHFNLLSAKNVFENVAFALEIARWEKNKIKSRVHELLELVGLEDKMHFYPKQLSGGQKQRVAIARSLANCPDLLLCDEATSALDSKTTHSILTLLSGIQKKLDLSIVFITHEIEVVKELCNQMCVISSGEIVERGSVEEIFANPKHAVTKELLGIRNEHADKKSQDVYRIVFLGEHLDEPIISNLIKRFKIDVSIISGNIEELTTKDIGYLVVRFLGNTAETQRALEYLNALGLQVEKLKD</sequence>